<comment type="function">
    <text evidence="1">Binds 23S rRNA and is also seen to make contacts with the A and possibly P site tRNAs.</text>
</comment>
<comment type="subunit">
    <text evidence="1">Part of the 50S ribosomal subunit.</text>
</comment>
<comment type="similarity">
    <text evidence="1">Belongs to the universal ribosomal protein uL16 family.</text>
</comment>
<dbReference type="EMBL" id="BA000017">
    <property type="protein sequence ID" value="BAB58405.1"/>
    <property type="molecule type" value="Genomic_DNA"/>
</dbReference>
<dbReference type="RefSeq" id="WP_000926310.1">
    <property type="nucleotide sequence ID" value="NC_002758.2"/>
</dbReference>
<dbReference type="SMR" id="Q99S28"/>
<dbReference type="GeneID" id="98346555"/>
<dbReference type="KEGG" id="sav:SAV2243"/>
<dbReference type="HOGENOM" id="CLU_078858_2_1_9"/>
<dbReference type="PhylomeDB" id="Q99S28"/>
<dbReference type="Proteomes" id="UP000002481">
    <property type="component" value="Chromosome"/>
</dbReference>
<dbReference type="GO" id="GO:0022625">
    <property type="term" value="C:cytosolic large ribosomal subunit"/>
    <property type="evidence" value="ECO:0007669"/>
    <property type="project" value="TreeGrafter"/>
</dbReference>
<dbReference type="GO" id="GO:0019843">
    <property type="term" value="F:rRNA binding"/>
    <property type="evidence" value="ECO:0007669"/>
    <property type="project" value="UniProtKB-UniRule"/>
</dbReference>
<dbReference type="GO" id="GO:0003735">
    <property type="term" value="F:structural constituent of ribosome"/>
    <property type="evidence" value="ECO:0007669"/>
    <property type="project" value="InterPro"/>
</dbReference>
<dbReference type="GO" id="GO:0000049">
    <property type="term" value="F:tRNA binding"/>
    <property type="evidence" value="ECO:0007669"/>
    <property type="project" value="UniProtKB-KW"/>
</dbReference>
<dbReference type="GO" id="GO:0006412">
    <property type="term" value="P:translation"/>
    <property type="evidence" value="ECO:0007669"/>
    <property type="project" value="UniProtKB-UniRule"/>
</dbReference>
<dbReference type="CDD" id="cd01433">
    <property type="entry name" value="Ribosomal_L16_L10e"/>
    <property type="match status" value="1"/>
</dbReference>
<dbReference type="FunFam" id="3.90.1170.10:FF:000001">
    <property type="entry name" value="50S ribosomal protein L16"/>
    <property type="match status" value="1"/>
</dbReference>
<dbReference type="Gene3D" id="3.90.1170.10">
    <property type="entry name" value="Ribosomal protein L10e/L16"/>
    <property type="match status" value="1"/>
</dbReference>
<dbReference type="HAMAP" id="MF_01342">
    <property type="entry name" value="Ribosomal_uL16"/>
    <property type="match status" value="1"/>
</dbReference>
<dbReference type="InterPro" id="IPR047873">
    <property type="entry name" value="Ribosomal_uL16"/>
</dbReference>
<dbReference type="InterPro" id="IPR000114">
    <property type="entry name" value="Ribosomal_uL16_bact-type"/>
</dbReference>
<dbReference type="InterPro" id="IPR020798">
    <property type="entry name" value="Ribosomal_uL16_CS"/>
</dbReference>
<dbReference type="InterPro" id="IPR016180">
    <property type="entry name" value="Ribosomal_uL16_dom"/>
</dbReference>
<dbReference type="InterPro" id="IPR036920">
    <property type="entry name" value="Ribosomal_uL16_sf"/>
</dbReference>
<dbReference type="NCBIfam" id="TIGR01164">
    <property type="entry name" value="rplP_bact"/>
    <property type="match status" value="1"/>
</dbReference>
<dbReference type="PANTHER" id="PTHR12220">
    <property type="entry name" value="50S/60S RIBOSOMAL PROTEIN L16"/>
    <property type="match status" value="1"/>
</dbReference>
<dbReference type="PANTHER" id="PTHR12220:SF13">
    <property type="entry name" value="LARGE RIBOSOMAL SUBUNIT PROTEIN UL16M"/>
    <property type="match status" value="1"/>
</dbReference>
<dbReference type="Pfam" id="PF00252">
    <property type="entry name" value="Ribosomal_L16"/>
    <property type="match status" value="1"/>
</dbReference>
<dbReference type="PRINTS" id="PR00060">
    <property type="entry name" value="RIBOSOMALL16"/>
</dbReference>
<dbReference type="SUPFAM" id="SSF54686">
    <property type="entry name" value="Ribosomal protein L16p/L10e"/>
    <property type="match status" value="1"/>
</dbReference>
<dbReference type="PROSITE" id="PS00586">
    <property type="entry name" value="RIBOSOMAL_L16_1"/>
    <property type="match status" value="1"/>
</dbReference>
<dbReference type="PROSITE" id="PS00701">
    <property type="entry name" value="RIBOSOMAL_L16_2"/>
    <property type="match status" value="1"/>
</dbReference>
<accession>Q99S28</accession>
<proteinExistence type="inferred from homology"/>
<reference key="1">
    <citation type="journal article" date="2001" name="Lancet">
        <title>Whole genome sequencing of meticillin-resistant Staphylococcus aureus.</title>
        <authorList>
            <person name="Kuroda M."/>
            <person name="Ohta T."/>
            <person name="Uchiyama I."/>
            <person name="Baba T."/>
            <person name="Yuzawa H."/>
            <person name="Kobayashi I."/>
            <person name="Cui L."/>
            <person name="Oguchi A."/>
            <person name="Aoki K."/>
            <person name="Nagai Y."/>
            <person name="Lian J.-Q."/>
            <person name="Ito T."/>
            <person name="Kanamori M."/>
            <person name="Matsumaru H."/>
            <person name="Maruyama A."/>
            <person name="Murakami H."/>
            <person name="Hosoyama A."/>
            <person name="Mizutani-Ui Y."/>
            <person name="Takahashi N.K."/>
            <person name="Sawano T."/>
            <person name="Inoue R."/>
            <person name="Kaito C."/>
            <person name="Sekimizu K."/>
            <person name="Hirakawa H."/>
            <person name="Kuhara S."/>
            <person name="Goto S."/>
            <person name="Yabuzaki J."/>
            <person name="Kanehisa M."/>
            <person name="Yamashita A."/>
            <person name="Oshima K."/>
            <person name="Furuya K."/>
            <person name="Yoshino C."/>
            <person name="Shiba T."/>
            <person name="Hattori M."/>
            <person name="Ogasawara N."/>
            <person name="Hayashi H."/>
            <person name="Hiramatsu K."/>
        </authorList>
    </citation>
    <scope>NUCLEOTIDE SEQUENCE [LARGE SCALE GENOMIC DNA]</scope>
    <source>
        <strain>Mu50 / ATCC 700699</strain>
    </source>
</reference>
<evidence type="ECO:0000255" key="1">
    <source>
        <dbReference type="HAMAP-Rule" id="MF_01342"/>
    </source>
</evidence>
<evidence type="ECO:0000256" key="2">
    <source>
        <dbReference type="SAM" id="MobiDB-lite"/>
    </source>
</evidence>
<evidence type="ECO:0000305" key="3"/>
<gene>
    <name evidence="1" type="primary">rplP</name>
    <name type="ordered locus">SAV2243</name>
</gene>
<sequence>MLLPKRVKYRRQHRPKTTGRSKGGNYVTFGEFGLQATTTSWITSRQIESARIAMTRYMKRGGKVWIKIFPHTPYTKKPLEVRMGAGKGAVEGWIAVVKPGRILFEVAGVSEEVAREALRLASHKLPVKTKFVKREELGGETNES</sequence>
<name>RL16_STAAM</name>
<protein>
    <recommendedName>
        <fullName evidence="1">Large ribosomal subunit protein uL16</fullName>
    </recommendedName>
    <alternativeName>
        <fullName evidence="3">50S ribosomal protein L16</fullName>
    </alternativeName>
</protein>
<organism>
    <name type="scientific">Staphylococcus aureus (strain Mu50 / ATCC 700699)</name>
    <dbReference type="NCBI Taxonomy" id="158878"/>
    <lineage>
        <taxon>Bacteria</taxon>
        <taxon>Bacillati</taxon>
        <taxon>Bacillota</taxon>
        <taxon>Bacilli</taxon>
        <taxon>Bacillales</taxon>
        <taxon>Staphylococcaceae</taxon>
        <taxon>Staphylococcus</taxon>
    </lineage>
</organism>
<feature type="chain" id="PRO_0000062206" description="Large ribosomal subunit protein uL16">
    <location>
        <begin position="1"/>
        <end position="144"/>
    </location>
</feature>
<feature type="region of interest" description="Disordered" evidence="2">
    <location>
        <begin position="1"/>
        <end position="23"/>
    </location>
</feature>
<feature type="compositionally biased region" description="Basic residues" evidence="2">
    <location>
        <begin position="1"/>
        <end position="19"/>
    </location>
</feature>
<keyword id="KW-0687">Ribonucleoprotein</keyword>
<keyword id="KW-0689">Ribosomal protein</keyword>
<keyword id="KW-0694">RNA-binding</keyword>
<keyword id="KW-0699">rRNA-binding</keyword>
<keyword id="KW-0820">tRNA-binding</keyword>